<keyword id="KW-0963">Cytoplasm</keyword>
<keyword id="KW-0489">Methyltransferase</keyword>
<keyword id="KW-0694">RNA-binding</keyword>
<keyword id="KW-0698">rRNA processing</keyword>
<keyword id="KW-0949">S-adenosyl-L-methionine</keyword>
<keyword id="KW-0808">Transferase</keyword>
<accession>Q0HS06</accession>
<organism>
    <name type="scientific">Shewanella sp. (strain MR-7)</name>
    <dbReference type="NCBI Taxonomy" id="60481"/>
    <lineage>
        <taxon>Bacteria</taxon>
        <taxon>Pseudomonadati</taxon>
        <taxon>Pseudomonadota</taxon>
        <taxon>Gammaproteobacteria</taxon>
        <taxon>Alteromonadales</taxon>
        <taxon>Shewanellaceae</taxon>
        <taxon>Shewanella</taxon>
    </lineage>
</organism>
<name>RSMA_SHESR</name>
<proteinExistence type="inferred from homology"/>
<protein>
    <recommendedName>
        <fullName evidence="1">Ribosomal RNA small subunit methyltransferase A</fullName>
        <ecNumber evidence="1">2.1.1.182</ecNumber>
    </recommendedName>
    <alternativeName>
        <fullName evidence="1">16S rRNA (adenine(1518)-N(6)/adenine(1519)-N(6))-dimethyltransferase</fullName>
    </alternativeName>
    <alternativeName>
        <fullName evidence="1">16S rRNA dimethyladenosine transferase</fullName>
    </alternativeName>
    <alternativeName>
        <fullName evidence="1">16S rRNA dimethylase</fullName>
    </alternativeName>
    <alternativeName>
        <fullName evidence="1">S-adenosylmethionine-6-N', N'-adenosyl(rRNA) dimethyltransferase</fullName>
    </alternativeName>
</protein>
<dbReference type="EC" id="2.1.1.182" evidence="1"/>
<dbReference type="EMBL" id="CP000444">
    <property type="protein sequence ID" value="ABI44099.1"/>
    <property type="molecule type" value="Genomic_DNA"/>
</dbReference>
<dbReference type="SMR" id="Q0HS06"/>
<dbReference type="KEGG" id="shm:Shewmr7_3115"/>
<dbReference type="HOGENOM" id="CLU_041220_0_1_6"/>
<dbReference type="GO" id="GO:0005829">
    <property type="term" value="C:cytosol"/>
    <property type="evidence" value="ECO:0007669"/>
    <property type="project" value="TreeGrafter"/>
</dbReference>
<dbReference type="GO" id="GO:0052908">
    <property type="term" value="F:16S rRNA (adenine(1518)-N(6)/adenine(1519)-N(6))-dimethyltransferase activity"/>
    <property type="evidence" value="ECO:0007669"/>
    <property type="project" value="UniProtKB-EC"/>
</dbReference>
<dbReference type="GO" id="GO:0003723">
    <property type="term" value="F:RNA binding"/>
    <property type="evidence" value="ECO:0007669"/>
    <property type="project" value="UniProtKB-KW"/>
</dbReference>
<dbReference type="FunFam" id="1.10.8.100:FF:000001">
    <property type="entry name" value="Ribosomal RNA small subunit methyltransferase A"/>
    <property type="match status" value="1"/>
</dbReference>
<dbReference type="FunFam" id="3.40.50.150:FF:000006">
    <property type="entry name" value="Ribosomal RNA small subunit methyltransferase A"/>
    <property type="match status" value="1"/>
</dbReference>
<dbReference type="Gene3D" id="1.10.8.100">
    <property type="entry name" value="Ribosomal RNA adenine dimethylase-like, domain 2"/>
    <property type="match status" value="1"/>
</dbReference>
<dbReference type="Gene3D" id="3.40.50.150">
    <property type="entry name" value="Vaccinia Virus protein VP39"/>
    <property type="match status" value="1"/>
</dbReference>
<dbReference type="HAMAP" id="MF_00607">
    <property type="entry name" value="16SrRNA_methyltr_A"/>
    <property type="match status" value="1"/>
</dbReference>
<dbReference type="InterPro" id="IPR001737">
    <property type="entry name" value="KsgA/Erm"/>
</dbReference>
<dbReference type="InterPro" id="IPR023165">
    <property type="entry name" value="rRNA_Ade_diMease-like_C"/>
</dbReference>
<dbReference type="InterPro" id="IPR020596">
    <property type="entry name" value="rRNA_Ade_Mease_Trfase_CS"/>
</dbReference>
<dbReference type="InterPro" id="IPR020598">
    <property type="entry name" value="rRNA_Ade_methylase_Trfase_N"/>
</dbReference>
<dbReference type="InterPro" id="IPR011530">
    <property type="entry name" value="rRNA_adenine_dimethylase"/>
</dbReference>
<dbReference type="InterPro" id="IPR029063">
    <property type="entry name" value="SAM-dependent_MTases_sf"/>
</dbReference>
<dbReference type="NCBIfam" id="TIGR00755">
    <property type="entry name" value="ksgA"/>
    <property type="match status" value="1"/>
</dbReference>
<dbReference type="PANTHER" id="PTHR11727">
    <property type="entry name" value="DIMETHYLADENOSINE TRANSFERASE"/>
    <property type="match status" value="1"/>
</dbReference>
<dbReference type="PANTHER" id="PTHR11727:SF7">
    <property type="entry name" value="DIMETHYLADENOSINE TRANSFERASE-RELATED"/>
    <property type="match status" value="1"/>
</dbReference>
<dbReference type="Pfam" id="PF00398">
    <property type="entry name" value="RrnaAD"/>
    <property type="match status" value="1"/>
</dbReference>
<dbReference type="SMART" id="SM00650">
    <property type="entry name" value="rADc"/>
    <property type="match status" value="1"/>
</dbReference>
<dbReference type="SUPFAM" id="SSF53335">
    <property type="entry name" value="S-adenosyl-L-methionine-dependent methyltransferases"/>
    <property type="match status" value="1"/>
</dbReference>
<dbReference type="PROSITE" id="PS01131">
    <property type="entry name" value="RRNA_A_DIMETH"/>
    <property type="match status" value="1"/>
</dbReference>
<dbReference type="PROSITE" id="PS51689">
    <property type="entry name" value="SAM_RNA_A_N6_MT"/>
    <property type="match status" value="1"/>
</dbReference>
<evidence type="ECO:0000255" key="1">
    <source>
        <dbReference type="HAMAP-Rule" id="MF_00607"/>
    </source>
</evidence>
<feature type="chain" id="PRO_1000056674" description="Ribosomal RNA small subunit methyltransferase A">
    <location>
        <begin position="1"/>
        <end position="268"/>
    </location>
</feature>
<feature type="binding site" evidence="1">
    <location>
        <position position="18"/>
    </location>
    <ligand>
        <name>S-adenosyl-L-methionine</name>
        <dbReference type="ChEBI" id="CHEBI:59789"/>
    </ligand>
</feature>
<feature type="binding site" evidence="1">
    <location>
        <position position="20"/>
    </location>
    <ligand>
        <name>S-adenosyl-L-methionine</name>
        <dbReference type="ChEBI" id="CHEBI:59789"/>
    </ligand>
</feature>
<feature type="binding site" evidence="1">
    <location>
        <position position="45"/>
    </location>
    <ligand>
        <name>S-adenosyl-L-methionine</name>
        <dbReference type="ChEBI" id="CHEBI:59789"/>
    </ligand>
</feature>
<feature type="binding site" evidence="1">
    <location>
        <position position="66"/>
    </location>
    <ligand>
        <name>S-adenosyl-L-methionine</name>
        <dbReference type="ChEBI" id="CHEBI:59789"/>
    </ligand>
</feature>
<feature type="binding site" evidence="1">
    <location>
        <position position="91"/>
    </location>
    <ligand>
        <name>S-adenosyl-L-methionine</name>
        <dbReference type="ChEBI" id="CHEBI:59789"/>
    </ligand>
</feature>
<feature type="binding site" evidence="1">
    <location>
        <position position="112"/>
    </location>
    <ligand>
        <name>S-adenosyl-L-methionine</name>
        <dbReference type="ChEBI" id="CHEBI:59789"/>
    </ligand>
</feature>
<sequence>MSSKVHLGHTARKRFGQNFLTDDNVINRIVGAIAPDNDHVMVEIGPGLGALTEPVATAIDNLTVVELDRDLVERLQNHPVLKDKLTIHQGDALQFDFSQLVVPGKKLKVFGNLPYNISTPLMFHLFEFAEQIETMHFMLQKEVVLRLSASPGNKAYGRLTVMAQYFCQVVPVLEVPPHSFAPPPKVDSAVVRLLPYAEKPFPCKDVNVLRQLCTTAFNMRRKTLRNNLKQVLSDEEFEQLGIDPNLRPEQISVEQYVAMANMVCDKQA</sequence>
<gene>
    <name evidence="1" type="primary">rsmA</name>
    <name evidence="1" type="synonym">ksgA</name>
    <name type="ordered locus">Shewmr7_3115</name>
</gene>
<comment type="function">
    <text evidence="1">Specifically dimethylates two adjacent adenosines (A1518 and A1519) in the loop of a conserved hairpin near the 3'-end of 16S rRNA in the 30S particle. May play a critical role in biogenesis of 30S subunits.</text>
</comment>
<comment type="catalytic activity">
    <reaction evidence="1">
        <text>adenosine(1518)/adenosine(1519) in 16S rRNA + 4 S-adenosyl-L-methionine = N(6)-dimethyladenosine(1518)/N(6)-dimethyladenosine(1519) in 16S rRNA + 4 S-adenosyl-L-homocysteine + 4 H(+)</text>
        <dbReference type="Rhea" id="RHEA:19609"/>
        <dbReference type="Rhea" id="RHEA-COMP:10232"/>
        <dbReference type="Rhea" id="RHEA-COMP:10233"/>
        <dbReference type="ChEBI" id="CHEBI:15378"/>
        <dbReference type="ChEBI" id="CHEBI:57856"/>
        <dbReference type="ChEBI" id="CHEBI:59789"/>
        <dbReference type="ChEBI" id="CHEBI:74411"/>
        <dbReference type="ChEBI" id="CHEBI:74493"/>
        <dbReference type="EC" id="2.1.1.182"/>
    </reaction>
</comment>
<comment type="subcellular location">
    <subcellularLocation>
        <location evidence="1">Cytoplasm</location>
    </subcellularLocation>
</comment>
<comment type="similarity">
    <text evidence="1">Belongs to the class I-like SAM-binding methyltransferase superfamily. rRNA adenine N(6)-methyltransferase family. RsmA subfamily.</text>
</comment>
<reference key="1">
    <citation type="submission" date="2006-08" db="EMBL/GenBank/DDBJ databases">
        <title>Complete sequence of chromosome 1 of Shewanella sp. MR-7.</title>
        <authorList>
            <person name="Copeland A."/>
            <person name="Lucas S."/>
            <person name="Lapidus A."/>
            <person name="Barry K."/>
            <person name="Detter J.C."/>
            <person name="Glavina del Rio T."/>
            <person name="Hammon N."/>
            <person name="Israni S."/>
            <person name="Dalin E."/>
            <person name="Tice H."/>
            <person name="Pitluck S."/>
            <person name="Kiss H."/>
            <person name="Brettin T."/>
            <person name="Bruce D."/>
            <person name="Han C."/>
            <person name="Tapia R."/>
            <person name="Gilna P."/>
            <person name="Schmutz J."/>
            <person name="Larimer F."/>
            <person name="Land M."/>
            <person name="Hauser L."/>
            <person name="Kyrpides N."/>
            <person name="Mikhailova N."/>
            <person name="Nealson K."/>
            <person name="Konstantinidis K."/>
            <person name="Klappenbach J."/>
            <person name="Tiedje J."/>
            <person name="Richardson P."/>
        </authorList>
    </citation>
    <scope>NUCLEOTIDE SEQUENCE [LARGE SCALE GENOMIC DNA]</scope>
    <source>
        <strain>MR-7</strain>
    </source>
</reference>